<evidence type="ECO:0000255" key="1">
    <source>
        <dbReference type="HAMAP-Rule" id="MF_01897"/>
    </source>
</evidence>
<evidence type="ECO:0000255" key="2">
    <source>
        <dbReference type="PROSITE-ProRule" id="PRU01384"/>
    </source>
</evidence>
<evidence type="ECO:0000256" key="3">
    <source>
        <dbReference type="SAM" id="MobiDB-lite"/>
    </source>
</evidence>
<gene>
    <name evidence="1" type="primary">gyrA</name>
    <name type="ordered locus">RBE_0794</name>
</gene>
<organism>
    <name type="scientific">Rickettsia bellii (strain RML369-C)</name>
    <dbReference type="NCBI Taxonomy" id="336407"/>
    <lineage>
        <taxon>Bacteria</taxon>
        <taxon>Pseudomonadati</taxon>
        <taxon>Pseudomonadota</taxon>
        <taxon>Alphaproteobacteria</taxon>
        <taxon>Rickettsiales</taxon>
        <taxon>Rickettsiaceae</taxon>
        <taxon>Rickettsieae</taxon>
        <taxon>Rickettsia</taxon>
        <taxon>belli group</taxon>
    </lineage>
</organism>
<protein>
    <recommendedName>
        <fullName evidence="1">DNA gyrase subunit A</fullName>
        <ecNumber evidence="1">5.6.2.2</ecNumber>
    </recommendedName>
</protein>
<proteinExistence type="inferred from homology"/>
<feature type="chain" id="PRO_0000273107" description="DNA gyrase subunit A">
    <location>
        <begin position="1"/>
        <end position="905"/>
    </location>
</feature>
<feature type="domain" description="Topo IIA-type catalytic" evidence="2">
    <location>
        <begin position="35"/>
        <end position="524"/>
    </location>
</feature>
<feature type="region of interest" description="Disordered" evidence="3">
    <location>
        <begin position="882"/>
        <end position="905"/>
    </location>
</feature>
<feature type="short sequence motif" description="GyrA-box" evidence="1">
    <location>
        <begin position="551"/>
        <end position="557"/>
    </location>
</feature>
<feature type="compositionally biased region" description="Acidic residues" evidence="3">
    <location>
        <begin position="885"/>
        <end position="905"/>
    </location>
</feature>
<feature type="active site" description="O-(5'-phospho-DNA)-tyrosine intermediate" evidence="1">
    <location>
        <position position="123"/>
    </location>
</feature>
<dbReference type="EC" id="5.6.2.2" evidence="1"/>
<dbReference type="EMBL" id="CP000087">
    <property type="protein sequence ID" value="ABE04875.1"/>
    <property type="molecule type" value="Genomic_DNA"/>
</dbReference>
<dbReference type="RefSeq" id="WP_011477462.1">
    <property type="nucleotide sequence ID" value="NC_007940.1"/>
</dbReference>
<dbReference type="SMR" id="Q1RID9"/>
<dbReference type="KEGG" id="rbe:RBE_0794"/>
<dbReference type="eggNOG" id="COG0188">
    <property type="taxonomic scope" value="Bacteria"/>
</dbReference>
<dbReference type="HOGENOM" id="CLU_002977_6_1_5"/>
<dbReference type="OrthoDB" id="9806486at2"/>
<dbReference type="Proteomes" id="UP000001951">
    <property type="component" value="Chromosome"/>
</dbReference>
<dbReference type="GO" id="GO:0005694">
    <property type="term" value="C:chromosome"/>
    <property type="evidence" value="ECO:0007669"/>
    <property type="project" value="InterPro"/>
</dbReference>
<dbReference type="GO" id="GO:0005737">
    <property type="term" value="C:cytoplasm"/>
    <property type="evidence" value="ECO:0007669"/>
    <property type="project" value="UniProtKB-SubCell"/>
</dbReference>
<dbReference type="GO" id="GO:0009330">
    <property type="term" value="C:DNA topoisomerase type II (double strand cut, ATP-hydrolyzing) complex"/>
    <property type="evidence" value="ECO:0007669"/>
    <property type="project" value="TreeGrafter"/>
</dbReference>
<dbReference type="GO" id="GO:0005524">
    <property type="term" value="F:ATP binding"/>
    <property type="evidence" value="ECO:0007669"/>
    <property type="project" value="UniProtKB-UniRule"/>
</dbReference>
<dbReference type="GO" id="GO:0003677">
    <property type="term" value="F:DNA binding"/>
    <property type="evidence" value="ECO:0007669"/>
    <property type="project" value="UniProtKB-UniRule"/>
</dbReference>
<dbReference type="GO" id="GO:0034335">
    <property type="term" value="F:DNA negative supercoiling activity"/>
    <property type="evidence" value="ECO:0007669"/>
    <property type="project" value="UniProtKB-ARBA"/>
</dbReference>
<dbReference type="GO" id="GO:0006265">
    <property type="term" value="P:DNA topological change"/>
    <property type="evidence" value="ECO:0007669"/>
    <property type="project" value="UniProtKB-UniRule"/>
</dbReference>
<dbReference type="GO" id="GO:0006261">
    <property type="term" value="P:DNA-templated DNA replication"/>
    <property type="evidence" value="ECO:0007669"/>
    <property type="project" value="UniProtKB-UniRule"/>
</dbReference>
<dbReference type="CDD" id="cd00187">
    <property type="entry name" value="TOP4c"/>
    <property type="match status" value="1"/>
</dbReference>
<dbReference type="FunFam" id="1.10.268.10:FF:000001">
    <property type="entry name" value="DNA gyrase subunit A"/>
    <property type="match status" value="1"/>
</dbReference>
<dbReference type="FunFam" id="3.30.1360.40:FF:000002">
    <property type="entry name" value="DNA gyrase subunit A"/>
    <property type="match status" value="1"/>
</dbReference>
<dbReference type="FunFam" id="3.90.199.10:FF:000001">
    <property type="entry name" value="DNA gyrase subunit A"/>
    <property type="match status" value="1"/>
</dbReference>
<dbReference type="Gene3D" id="3.30.1360.40">
    <property type="match status" value="1"/>
</dbReference>
<dbReference type="Gene3D" id="2.120.10.90">
    <property type="entry name" value="DNA gyrase/topoisomerase IV, subunit A, C-terminal"/>
    <property type="match status" value="1"/>
</dbReference>
<dbReference type="Gene3D" id="3.90.199.10">
    <property type="entry name" value="Topoisomerase II, domain 5"/>
    <property type="match status" value="1"/>
</dbReference>
<dbReference type="Gene3D" id="1.10.268.10">
    <property type="entry name" value="Topoisomerase, domain 3"/>
    <property type="match status" value="1"/>
</dbReference>
<dbReference type="HAMAP" id="MF_01897">
    <property type="entry name" value="GyrA"/>
    <property type="match status" value="1"/>
</dbReference>
<dbReference type="InterPro" id="IPR005743">
    <property type="entry name" value="GyrA"/>
</dbReference>
<dbReference type="InterPro" id="IPR006691">
    <property type="entry name" value="GyrA/parC_rep"/>
</dbReference>
<dbReference type="InterPro" id="IPR035516">
    <property type="entry name" value="Gyrase/topoIV_suA_C"/>
</dbReference>
<dbReference type="InterPro" id="IPR013760">
    <property type="entry name" value="Topo_IIA-like_dom_sf"/>
</dbReference>
<dbReference type="InterPro" id="IPR013758">
    <property type="entry name" value="Topo_IIA_A/C_ab"/>
</dbReference>
<dbReference type="InterPro" id="IPR013757">
    <property type="entry name" value="Topo_IIA_A_a_sf"/>
</dbReference>
<dbReference type="InterPro" id="IPR002205">
    <property type="entry name" value="Topo_IIA_dom_A"/>
</dbReference>
<dbReference type="InterPro" id="IPR050220">
    <property type="entry name" value="Type_II_DNA_Topoisomerases"/>
</dbReference>
<dbReference type="NCBIfam" id="TIGR01063">
    <property type="entry name" value="gyrA"/>
    <property type="match status" value="1"/>
</dbReference>
<dbReference type="NCBIfam" id="NF004043">
    <property type="entry name" value="PRK05560.1"/>
    <property type="match status" value="1"/>
</dbReference>
<dbReference type="NCBIfam" id="NF004044">
    <property type="entry name" value="PRK05561.1"/>
    <property type="match status" value="1"/>
</dbReference>
<dbReference type="PANTHER" id="PTHR43493:SF5">
    <property type="entry name" value="DNA GYRASE SUBUNIT A, CHLOROPLASTIC_MITOCHONDRIAL"/>
    <property type="match status" value="1"/>
</dbReference>
<dbReference type="PANTHER" id="PTHR43493">
    <property type="entry name" value="DNA GYRASE/TOPOISOMERASE SUBUNIT A"/>
    <property type="match status" value="1"/>
</dbReference>
<dbReference type="Pfam" id="PF03989">
    <property type="entry name" value="DNA_gyraseA_C"/>
    <property type="match status" value="6"/>
</dbReference>
<dbReference type="Pfam" id="PF00521">
    <property type="entry name" value="DNA_topoisoIV"/>
    <property type="match status" value="1"/>
</dbReference>
<dbReference type="SMART" id="SM00434">
    <property type="entry name" value="TOP4c"/>
    <property type="match status" value="1"/>
</dbReference>
<dbReference type="SUPFAM" id="SSF101904">
    <property type="entry name" value="GyrA/ParC C-terminal domain-like"/>
    <property type="match status" value="1"/>
</dbReference>
<dbReference type="SUPFAM" id="SSF56719">
    <property type="entry name" value="Type II DNA topoisomerase"/>
    <property type="match status" value="1"/>
</dbReference>
<dbReference type="PROSITE" id="PS52040">
    <property type="entry name" value="TOPO_IIA"/>
    <property type="match status" value="1"/>
</dbReference>
<reference key="1">
    <citation type="journal article" date="2006" name="PLoS Genet.">
        <title>Genome sequence of Rickettsia bellii illuminates the role of amoebae in gene exchanges between intracellular pathogens.</title>
        <authorList>
            <person name="Ogata H."/>
            <person name="La Scola B."/>
            <person name="Audic S."/>
            <person name="Renesto P."/>
            <person name="Blanc G."/>
            <person name="Robert C."/>
            <person name="Fournier P.-E."/>
            <person name="Claverie J.-M."/>
            <person name="Raoult D."/>
        </authorList>
    </citation>
    <scope>NUCLEOTIDE SEQUENCE [LARGE SCALE GENOMIC DNA]</scope>
    <source>
        <strain>RML369-C</strain>
    </source>
</reference>
<keyword id="KW-0067">ATP-binding</keyword>
<keyword id="KW-0963">Cytoplasm</keyword>
<keyword id="KW-0238">DNA-binding</keyword>
<keyword id="KW-0413">Isomerase</keyword>
<keyword id="KW-0547">Nucleotide-binding</keyword>
<keyword id="KW-0799">Topoisomerase</keyword>
<accession>Q1RID9</accession>
<sequence length="905" mass="100679">MTDNNSSNLVPVNIEDEMKVSYLDYAMSVIVSRAIPDVRDGLKPVHRRIIYSMHEAGNHANRAYRKSARIVGDVMGKYHPHGDSAIYDSLVRMAQDFSLRLPLVDGQGNFGSLDGDAAAAMRYTESRMAKVAHKLIEDIDKETVSFNPNYDGSEEEPSVLPSMFPNLLVNGSGGIAVGMATNIPPHNLGEVIDACCLYVDNNDIEILDLLEVVKGPDFPTSGIILGVNGIKSAYLTGRGSIAIRGRAEIENLGNGRQAIIITEIPYMVNKARLVEKIAEMVKEKRIEGISDLRDESNKNGIRIYIELKKDIVAEVVLNQIYSCTQLQTSFGVIMLALKDGLPKVMNLKEVIAAFVSFREVVITNRTIYLLNKARDKAHILLGLTIAVSNIDEIIRIIKAASDPNAAKQELMARSWDALNILPLVKLVDDKAMLNEEGKCSFTEAQAKAILEMRLQRLTAMEKNKLEEDLKNLATEITEYLNILGSRERLLEILKEELIKVKEEFATPRLTSIEFGEFDQDIEDLIQREEMVVTVTLGGYIKRVPLSSYRAQKRGGKGRSGLSMRDEDITTQVFVGSTHTPMLFFSNIGQVYSLKLYKLPLSNPQGKGRPMVNILPLKGDEHITNIMPLPENQDEWDNLNIMFATAKGNIRRSDLLDFKKIQSNGKIAIRLDEDDKLIDVKPCKEDEHILLATKSGKALRFPVESLRVIKSRTSDGVRGMRLAEDDSVISMTVLKGIKATREERDAYLSVSWEKRLEIAKGEEFNSEELGVDLTAESILEMANSEEFILTVTENGFGKRSSAYGYRITDRGGSGIINMDINDKTGLVVGVMPVKMDDELMLITNSGKLIRCKLETVRITGRNTSGVTLFRLDDGEKVVSASLIAESSDDNEEDSEFEEEVAEEGSE</sequence>
<name>GYRA_RICBR</name>
<comment type="function">
    <text evidence="1">A type II topoisomerase that negatively supercoils closed circular double-stranded (ds) DNA in an ATP-dependent manner to modulate DNA topology and maintain chromosomes in an underwound state. Negative supercoiling favors strand separation, and DNA replication, transcription, recombination and repair, all of which involve strand separation. Also able to catalyze the interconversion of other topological isomers of dsDNA rings, including catenanes and knotted rings. Type II topoisomerases break and join 2 DNA strands simultaneously in an ATP-dependent manner.</text>
</comment>
<comment type="catalytic activity">
    <reaction evidence="1">
        <text>ATP-dependent breakage, passage and rejoining of double-stranded DNA.</text>
        <dbReference type="EC" id="5.6.2.2"/>
    </reaction>
</comment>
<comment type="subunit">
    <text evidence="1">Heterotetramer, composed of two GyrA and two GyrB chains. In the heterotetramer, GyrA contains the active site tyrosine that forms a transient covalent intermediate with DNA, while GyrB binds cofactors and catalyzes ATP hydrolysis.</text>
</comment>
<comment type="subcellular location">
    <subcellularLocation>
        <location evidence="1">Cytoplasm</location>
    </subcellularLocation>
</comment>
<comment type="miscellaneous">
    <text evidence="1">Few gyrases are as efficient as E.coli at forming negative supercoils. Not all organisms have 2 type II topoisomerases; in organisms with a single type II topoisomerase this enzyme also has to decatenate newly replicated chromosomes.</text>
</comment>
<comment type="similarity">
    <text evidence="1">Belongs to the type II topoisomerase GyrA/ParC subunit family.</text>
</comment>